<protein>
    <recommendedName>
        <fullName evidence="1">Small ribosomal subunit protein uS10c</fullName>
    </recommendedName>
    <alternativeName>
        <fullName evidence="2">30S ribosomal protein S10, chloroplastic</fullName>
    </alternativeName>
</protein>
<name>RR10_PORPU</name>
<geneLocation type="chloroplast"/>
<evidence type="ECO:0000255" key="1">
    <source>
        <dbReference type="HAMAP-Rule" id="MF_00508"/>
    </source>
</evidence>
<evidence type="ECO:0000305" key="2"/>
<reference key="1">
    <citation type="journal article" date="1995" name="Plant Mol. Biol. Rep.">
        <title>Complete nucleotide sequence of the Porphyra purpurea chloroplast genome.</title>
        <authorList>
            <person name="Reith M.E."/>
            <person name="Munholland J."/>
        </authorList>
    </citation>
    <scope>NUCLEOTIDE SEQUENCE [LARGE SCALE GENOMIC DNA]</scope>
    <source>
        <strain>Avonport</strain>
    </source>
</reference>
<dbReference type="EMBL" id="U38804">
    <property type="protein sequence ID" value="AAC08172.1"/>
    <property type="molecule type" value="Genomic_DNA"/>
</dbReference>
<dbReference type="PIR" id="S73207">
    <property type="entry name" value="S73207"/>
</dbReference>
<dbReference type="RefSeq" id="NP_053896.1">
    <property type="nucleotide sequence ID" value="NC_000925.1"/>
</dbReference>
<dbReference type="SMR" id="P51286"/>
<dbReference type="GeneID" id="809915"/>
<dbReference type="GO" id="GO:0009507">
    <property type="term" value="C:chloroplast"/>
    <property type="evidence" value="ECO:0007669"/>
    <property type="project" value="UniProtKB-SubCell"/>
</dbReference>
<dbReference type="GO" id="GO:1990904">
    <property type="term" value="C:ribonucleoprotein complex"/>
    <property type="evidence" value="ECO:0007669"/>
    <property type="project" value="UniProtKB-KW"/>
</dbReference>
<dbReference type="GO" id="GO:0005840">
    <property type="term" value="C:ribosome"/>
    <property type="evidence" value="ECO:0007669"/>
    <property type="project" value="UniProtKB-KW"/>
</dbReference>
<dbReference type="GO" id="GO:0003735">
    <property type="term" value="F:structural constituent of ribosome"/>
    <property type="evidence" value="ECO:0007669"/>
    <property type="project" value="InterPro"/>
</dbReference>
<dbReference type="GO" id="GO:0000049">
    <property type="term" value="F:tRNA binding"/>
    <property type="evidence" value="ECO:0007669"/>
    <property type="project" value="UniProtKB-UniRule"/>
</dbReference>
<dbReference type="GO" id="GO:0006412">
    <property type="term" value="P:translation"/>
    <property type="evidence" value="ECO:0007669"/>
    <property type="project" value="UniProtKB-UniRule"/>
</dbReference>
<dbReference type="FunFam" id="3.30.70.600:FF:000001">
    <property type="entry name" value="30S ribosomal protein S10"/>
    <property type="match status" value="1"/>
</dbReference>
<dbReference type="Gene3D" id="3.30.70.600">
    <property type="entry name" value="Ribosomal protein S10 domain"/>
    <property type="match status" value="1"/>
</dbReference>
<dbReference type="HAMAP" id="MF_00508">
    <property type="entry name" value="Ribosomal_uS10"/>
    <property type="match status" value="1"/>
</dbReference>
<dbReference type="InterPro" id="IPR001848">
    <property type="entry name" value="Ribosomal_uS10"/>
</dbReference>
<dbReference type="InterPro" id="IPR018268">
    <property type="entry name" value="Ribosomal_uS10_CS"/>
</dbReference>
<dbReference type="InterPro" id="IPR027486">
    <property type="entry name" value="Ribosomal_uS10_dom"/>
</dbReference>
<dbReference type="InterPro" id="IPR036838">
    <property type="entry name" value="Ribosomal_uS10_dom_sf"/>
</dbReference>
<dbReference type="NCBIfam" id="NF001861">
    <property type="entry name" value="PRK00596.1"/>
    <property type="match status" value="1"/>
</dbReference>
<dbReference type="NCBIfam" id="TIGR01049">
    <property type="entry name" value="rpsJ_bact"/>
    <property type="match status" value="1"/>
</dbReference>
<dbReference type="PANTHER" id="PTHR11700">
    <property type="entry name" value="30S RIBOSOMAL PROTEIN S10 FAMILY MEMBER"/>
    <property type="match status" value="1"/>
</dbReference>
<dbReference type="Pfam" id="PF00338">
    <property type="entry name" value="Ribosomal_S10"/>
    <property type="match status" value="1"/>
</dbReference>
<dbReference type="PRINTS" id="PR00971">
    <property type="entry name" value="RIBOSOMALS10"/>
</dbReference>
<dbReference type="SMART" id="SM01403">
    <property type="entry name" value="Ribosomal_S10"/>
    <property type="match status" value="1"/>
</dbReference>
<dbReference type="SUPFAM" id="SSF54999">
    <property type="entry name" value="Ribosomal protein S10"/>
    <property type="match status" value="1"/>
</dbReference>
<dbReference type="PROSITE" id="PS00361">
    <property type="entry name" value="RIBOSOMAL_S10"/>
    <property type="match status" value="1"/>
</dbReference>
<gene>
    <name evidence="1" type="primary">rps10</name>
</gene>
<comment type="function">
    <text evidence="1">Involved in the binding of tRNA to the ribosomes.</text>
</comment>
<comment type="subunit">
    <text evidence="1">Part of the 30S ribosomal subunit.</text>
</comment>
<comment type="subcellular location">
    <subcellularLocation>
        <location evidence="1">Plastid</location>
        <location evidence="1">Chloroplast</location>
    </subcellularLocation>
</comment>
<comment type="similarity">
    <text evidence="1">Belongs to the universal ribosomal protein uS10 family.</text>
</comment>
<sequence>MTVTQQPKIRIKLKAYNSSLLNTSCKKIVDTAERTNAIAVGPIPLPTKRRIYCVLRSPHVDKDSREHFEIRSHRRIIDIHQPSSQTIDALMKLNLPSGVDIEVKL</sequence>
<proteinExistence type="inferred from homology"/>
<feature type="chain" id="PRO_0000146669" description="Small ribosomal subunit protein uS10c">
    <location>
        <begin position="1"/>
        <end position="105"/>
    </location>
</feature>
<keyword id="KW-0150">Chloroplast</keyword>
<keyword id="KW-0934">Plastid</keyword>
<keyword id="KW-0687">Ribonucleoprotein</keyword>
<keyword id="KW-0689">Ribosomal protein</keyword>
<organism>
    <name type="scientific">Porphyra purpurea</name>
    <name type="common">Red seaweed</name>
    <name type="synonym">Ulva purpurea</name>
    <dbReference type="NCBI Taxonomy" id="2787"/>
    <lineage>
        <taxon>Eukaryota</taxon>
        <taxon>Rhodophyta</taxon>
        <taxon>Bangiophyceae</taxon>
        <taxon>Bangiales</taxon>
        <taxon>Bangiaceae</taxon>
        <taxon>Porphyra</taxon>
    </lineage>
</organism>
<accession>P51286</accession>